<gene>
    <name evidence="1" type="primary">adk</name>
    <name type="ordered locus">SSU98_0093</name>
</gene>
<feature type="chain" id="PRO_1000021771" description="Adenylate kinase">
    <location>
        <begin position="1"/>
        <end position="213"/>
    </location>
</feature>
<feature type="region of interest" description="NMP" evidence="1">
    <location>
        <begin position="30"/>
        <end position="59"/>
    </location>
</feature>
<feature type="region of interest" description="LID" evidence="1">
    <location>
        <begin position="127"/>
        <end position="160"/>
    </location>
</feature>
<feature type="binding site" evidence="1">
    <location>
        <begin position="10"/>
        <end position="15"/>
    </location>
    <ligand>
        <name>ATP</name>
        <dbReference type="ChEBI" id="CHEBI:30616"/>
    </ligand>
</feature>
<feature type="binding site" evidence="1">
    <location>
        <position position="31"/>
    </location>
    <ligand>
        <name>AMP</name>
        <dbReference type="ChEBI" id="CHEBI:456215"/>
    </ligand>
</feature>
<feature type="binding site" evidence="1">
    <location>
        <position position="36"/>
    </location>
    <ligand>
        <name>AMP</name>
        <dbReference type="ChEBI" id="CHEBI:456215"/>
    </ligand>
</feature>
<feature type="binding site" evidence="1">
    <location>
        <begin position="57"/>
        <end position="59"/>
    </location>
    <ligand>
        <name>AMP</name>
        <dbReference type="ChEBI" id="CHEBI:456215"/>
    </ligand>
</feature>
<feature type="binding site" evidence="1">
    <location>
        <begin position="86"/>
        <end position="89"/>
    </location>
    <ligand>
        <name>AMP</name>
        <dbReference type="ChEBI" id="CHEBI:456215"/>
    </ligand>
</feature>
<feature type="binding site" evidence="1">
    <location>
        <position position="93"/>
    </location>
    <ligand>
        <name>AMP</name>
        <dbReference type="ChEBI" id="CHEBI:456215"/>
    </ligand>
</feature>
<feature type="binding site" evidence="1">
    <location>
        <position position="128"/>
    </location>
    <ligand>
        <name>ATP</name>
        <dbReference type="ChEBI" id="CHEBI:30616"/>
    </ligand>
</feature>
<feature type="binding site" evidence="1">
    <location>
        <begin position="137"/>
        <end position="138"/>
    </location>
    <ligand>
        <name>ATP</name>
        <dbReference type="ChEBI" id="CHEBI:30616"/>
    </ligand>
</feature>
<feature type="binding site" evidence="1">
    <location>
        <position position="157"/>
    </location>
    <ligand>
        <name>AMP</name>
        <dbReference type="ChEBI" id="CHEBI:456215"/>
    </ligand>
</feature>
<feature type="binding site" evidence="1">
    <location>
        <position position="168"/>
    </location>
    <ligand>
        <name>AMP</name>
        <dbReference type="ChEBI" id="CHEBI:456215"/>
    </ligand>
</feature>
<feature type="binding site" evidence="1">
    <location>
        <position position="196"/>
    </location>
    <ligand>
        <name>ATP</name>
        <dbReference type="ChEBI" id="CHEBI:30616"/>
    </ligand>
</feature>
<accession>A4VYR4</accession>
<proteinExistence type="inferred from homology"/>
<reference key="1">
    <citation type="journal article" date="2007" name="PLoS ONE">
        <title>A glimpse of streptococcal toxic shock syndrome from comparative genomics of S. suis 2 Chinese isolates.</title>
        <authorList>
            <person name="Chen C."/>
            <person name="Tang J."/>
            <person name="Dong W."/>
            <person name="Wang C."/>
            <person name="Feng Y."/>
            <person name="Wang J."/>
            <person name="Zheng F."/>
            <person name="Pan X."/>
            <person name="Liu D."/>
            <person name="Li M."/>
            <person name="Song Y."/>
            <person name="Zhu X."/>
            <person name="Sun H."/>
            <person name="Feng T."/>
            <person name="Guo Z."/>
            <person name="Ju A."/>
            <person name="Ge J."/>
            <person name="Dong Y."/>
            <person name="Sun W."/>
            <person name="Jiang Y."/>
            <person name="Wang J."/>
            <person name="Yan J."/>
            <person name="Yang H."/>
            <person name="Wang X."/>
            <person name="Gao G.F."/>
            <person name="Yang R."/>
            <person name="Wang J."/>
            <person name="Yu J."/>
        </authorList>
    </citation>
    <scope>NUCLEOTIDE SEQUENCE [LARGE SCALE GENOMIC DNA]</scope>
    <source>
        <strain>98HAH33</strain>
    </source>
</reference>
<evidence type="ECO:0000255" key="1">
    <source>
        <dbReference type="HAMAP-Rule" id="MF_00235"/>
    </source>
</evidence>
<name>KAD_STRS2</name>
<dbReference type="EC" id="2.7.4.3" evidence="1"/>
<dbReference type="EMBL" id="CP000408">
    <property type="protein sequence ID" value="ABP91253.1"/>
    <property type="molecule type" value="Genomic_DNA"/>
</dbReference>
<dbReference type="SMR" id="A4VYR4"/>
<dbReference type="KEGG" id="ssv:SSU98_0093"/>
<dbReference type="HOGENOM" id="CLU_032354_1_2_9"/>
<dbReference type="UniPathway" id="UPA00588">
    <property type="reaction ID" value="UER00649"/>
</dbReference>
<dbReference type="GO" id="GO:0005737">
    <property type="term" value="C:cytoplasm"/>
    <property type="evidence" value="ECO:0007669"/>
    <property type="project" value="UniProtKB-SubCell"/>
</dbReference>
<dbReference type="GO" id="GO:0004017">
    <property type="term" value="F:adenylate kinase activity"/>
    <property type="evidence" value="ECO:0007669"/>
    <property type="project" value="UniProtKB-UniRule"/>
</dbReference>
<dbReference type="GO" id="GO:0005524">
    <property type="term" value="F:ATP binding"/>
    <property type="evidence" value="ECO:0007669"/>
    <property type="project" value="UniProtKB-UniRule"/>
</dbReference>
<dbReference type="GO" id="GO:0044209">
    <property type="term" value="P:AMP salvage"/>
    <property type="evidence" value="ECO:0007669"/>
    <property type="project" value="UniProtKB-UniRule"/>
</dbReference>
<dbReference type="CDD" id="cd01428">
    <property type="entry name" value="ADK"/>
    <property type="match status" value="1"/>
</dbReference>
<dbReference type="FunFam" id="3.40.50.300:FF:000106">
    <property type="entry name" value="Adenylate kinase mitochondrial"/>
    <property type="match status" value="1"/>
</dbReference>
<dbReference type="Gene3D" id="3.40.50.300">
    <property type="entry name" value="P-loop containing nucleotide triphosphate hydrolases"/>
    <property type="match status" value="1"/>
</dbReference>
<dbReference type="HAMAP" id="MF_00235">
    <property type="entry name" value="Adenylate_kinase_Adk"/>
    <property type="match status" value="1"/>
</dbReference>
<dbReference type="InterPro" id="IPR006259">
    <property type="entry name" value="Adenyl_kin_sub"/>
</dbReference>
<dbReference type="InterPro" id="IPR000850">
    <property type="entry name" value="Adenylat/UMP-CMP_kin"/>
</dbReference>
<dbReference type="InterPro" id="IPR033690">
    <property type="entry name" value="Adenylat_kinase_CS"/>
</dbReference>
<dbReference type="InterPro" id="IPR027417">
    <property type="entry name" value="P-loop_NTPase"/>
</dbReference>
<dbReference type="NCBIfam" id="TIGR01351">
    <property type="entry name" value="adk"/>
    <property type="match status" value="1"/>
</dbReference>
<dbReference type="NCBIfam" id="NF001380">
    <property type="entry name" value="PRK00279.1-2"/>
    <property type="match status" value="1"/>
</dbReference>
<dbReference type="NCBIfam" id="NF001381">
    <property type="entry name" value="PRK00279.1-3"/>
    <property type="match status" value="1"/>
</dbReference>
<dbReference type="NCBIfam" id="NF001382">
    <property type="entry name" value="PRK00279.1-4"/>
    <property type="match status" value="1"/>
</dbReference>
<dbReference type="NCBIfam" id="NF011100">
    <property type="entry name" value="PRK14527.1"/>
    <property type="match status" value="1"/>
</dbReference>
<dbReference type="PANTHER" id="PTHR23359">
    <property type="entry name" value="NUCLEOTIDE KINASE"/>
    <property type="match status" value="1"/>
</dbReference>
<dbReference type="Pfam" id="PF00406">
    <property type="entry name" value="ADK"/>
    <property type="match status" value="1"/>
</dbReference>
<dbReference type="PRINTS" id="PR00094">
    <property type="entry name" value="ADENYLTKNASE"/>
</dbReference>
<dbReference type="SUPFAM" id="SSF52540">
    <property type="entry name" value="P-loop containing nucleoside triphosphate hydrolases"/>
    <property type="match status" value="1"/>
</dbReference>
<dbReference type="PROSITE" id="PS00113">
    <property type="entry name" value="ADENYLATE_KINASE"/>
    <property type="match status" value="1"/>
</dbReference>
<organism>
    <name type="scientific">Streptococcus suis (strain 98HAH33)</name>
    <dbReference type="NCBI Taxonomy" id="391296"/>
    <lineage>
        <taxon>Bacteria</taxon>
        <taxon>Bacillati</taxon>
        <taxon>Bacillota</taxon>
        <taxon>Bacilli</taxon>
        <taxon>Lactobacillales</taxon>
        <taxon>Streptococcaceae</taxon>
        <taxon>Streptococcus</taxon>
    </lineage>
</organism>
<keyword id="KW-0067">ATP-binding</keyword>
<keyword id="KW-0963">Cytoplasm</keyword>
<keyword id="KW-0418">Kinase</keyword>
<keyword id="KW-0545">Nucleotide biosynthesis</keyword>
<keyword id="KW-0547">Nucleotide-binding</keyword>
<keyword id="KW-0808">Transferase</keyword>
<sequence length="213" mass="23778">MNLLIMGLPGAGKGTQAAKIVEKFNVAHISTGDMFRAAMANQTEMGILAKSYIDKGDLVPDEVTNGIVKERLVQDDIKEKGFLLDGYPRTIEQAHALDENLADLGIELQGVINIEIDPSKLVERLSGRIIHKETGETFHKVFNPPVGDYKEEDFYQREDDKPESVKRRLEVNIAQGQPIIDHYRAKGLVHDIEGDQDIDLVFQAIDTVLSKLQ</sequence>
<protein>
    <recommendedName>
        <fullName evidence="1">Adenylate kinase</fullName>
        <shortName evidence="1">AK</shortName>
        <ecNumber evidence="1">2.7.4.3</ecNumber>
    </recommendedName>
    <alternativeName>
        <fullName evidence="1">ATP-AMP transphosphorylase</fullName>
    </alternativeName>
    <alternativeName>
        <fullName evidence="1">ATP:AMP phosphotransferase</fullName>
    </alternativeName>
    <alternativeName>
        <fullName evidence="1">Adenylate monophosphate kinase</fullName>
    </alternativeName>
</protein>
<comment type="function">
    <text evidence="1">Catalyzes the reversible transfer of the terminal phosphate group between ATP and AMP. Plays an important role in cellular energy homeostasis and in adenine nucleotide metabolism.</text>
</comment>
<comment type="catalytic activity">
    <reaction evidence="1">
        <text>AMP + ATP = 2 ADP</text>
        <dbReference type="Rhea" id="RHEA:12973"/>
        <dbReference type="ChEBI" id="CHEBI:30616"/>
        <dbReference type="ChEBI" id="CHEBI:456215"/>
        <dbReference type="ChEBI" id="CHEBI:456216"/>
        <dbReference type="EC" id="2.7.4.3"/>
    </reaction>
</comment>
<comment type="pathway">
    <text evidence="1">Purine metabolism; AMP biosynthesis via salvage pathway; AMP from ADP: step 1/1.</text>
</comment>
<comment type="subunit">
    <text evidence="1">Monomer.</text>
</comment>
<comment type="subcellular location">
    <subcellularLocation>
        <location evidence="1">Cytoplasm</location>
    </subcellularLocation>
</comment>
<comment type="domain">
    <text evidence="1">Consists of three domains, a large central CORE domain and two small peripheral domains, NMPbind and LID, which undergo movements during catalysis. The LID domain closes over the site of phosphoryl transfer upon ATP binding. Assembling and dissambling the active center during each catalytic cycle provides an effective means to prevent ATP hydrolysis.</text>
</comment>
<comment type="similarity">
    <text evidence="1">Belongs to the adenylate kinase family.</text>
</comment>